<reference key="1">
    <citation type="journal article" date="2000" name="Nature">
        <title>Sequence and analysis of chromosome 1 of the plant Arabidopsis thaliana.</title>
        <authorList>
            <person name="Theologis A."/>
            <person name="Ecker J.R."/>
            <person name="Palm C.J."/>
            <person name="Federspiel N.A."/>
            <person name="Kaul S."/>
            <person name="White O."/>
            <person name="Alonso J."/>
            <person name="Altafi H."/>
            <person name="Araujo R."/>
            <person name="Bowman C.L."/>
            <person name="Brooks S.Y."/>
            <person name="Buehler E."/>
            <person name="Chan A."/>
            <person name="Chao Q."/>
            <person name="Chen H."/>
            <person name="Cheuk R.F."/>
            <person name="Chin C.W."/>
            <person name="Chung M.K."/>
            <person name="Conn L."/>
            <person name="Conway A.B."/>
            <person name="Conway A.R."/>
            <person name="Creasy T.H."/>
            <person name="Dewar K."/>
            <person name="Dunn P."/>
            <person name="Etgu P."/>
            <person name="Feldblyum T.V."/>
            <person name="Feng J.-D."/>
            <person name="Fong B."/>
            <person name="Fujii C.Y."/>
            <person name="Gill J.E."/>
            <person name="Goldsmith A.D."/>
            <person name="Haas B."/>
            <person name="Hansen N.F."/>
            <person name="Hughes B."/>
            <person name="Huizar L."/>
            <person name="Hunter J.L."/>
            <person name="Jenkins J."/>
            <person name="Johnson-Hopson C."/>
            <person name="Khan S."/>
            <person name="Khaykin E."/>
            <person name="Kim C.J."/>
            <person name="Koo H.L."/>
            <person name="Kremenetskaia I."/>
            <person name="Kurtz D.B."/>
            <person name="Kwan A."/>
            <person name="Lam B."/>
            <person name="Langin-Hooper S."/>
            <person name="Lee A."/>
            <person name="Lee J.M."/>
            <person name="Lenz C.A."/>
            <person name="Li J.H."/>
            <person name="Li Y.-P."/>
            <person name="Lin X."/>
            <person name="Liu S.X."/>
            <person name="Liu Z.A."/>
            <person name="Luros J.S."/>
            <person name="Maiti R."/>
            <person name="Marziali A."/>
            <person name="Militscher J."/>
            <person name="Miranda M."/>
            <person name="Nguyen M."/>
            <person name="Nierman W.C."/>
            <person name="Osborne B.I."/>
            <person name="Pai G."/>
            <person name="Peterson J."/>
            <person name="Pham P.K."/>
            <person name="Rizzo M."/>
            <person name="Rooney T."/>
            <person name="Rowley D."/>
            <person name="Sakano H."/>
            <person name="Salzberg S.L."/>
            <person name="Schwartz J.R."/>
            <person name="Shinn P."/>
            <person name="Southwick A.M."/>
            <person name="Sun H."/>
            <person name="Tallon L.J."/>
            <person name="Tambunga G."/>
            <person name="Toriumi M.J."/>
            <person name="Town C.D."/>
            <person name="Utterback T."/>
            <person name="Van Aken S."/>
            <person name="Vaysberg M."/>
            <person name="Vysotskaia V.S."/>
            <person name="Walker M."/>
            <person name="Wu D."/>
            <person name="Yu G."/>
            <person name="Fraser C.M."/>
            <person name="Venter J.C."/>
            <person name="Davis R.W."/>
        </authorList>
    </citation>
    <scope>NUCLEOTIDE SEQUENCE [LARGE SCALE GENOMIC DNA]</scope>
    <source>
        <strain>cv. Columbia</strain>
    </source>
</reference>
<reference key="2">
    <citation type="journal article" date="2017" name="Plant J.">
        <title>Araport11: a complete reannotation of the Arabidopsis thaliana reference genome.</title>
        <authorList>
            <person name="Cheng C.Y."/>
            <person name="Krishnakumar V."/>
            <person name="Chan A.P."/>
            <person name="Thibaud-Nissen F."/>
            <person name="Schobel S."/>
            <person name="Town C.D."/>
        </authorList>
    </citation>
    <scope>GENOME REANNOTATION</scope>
    <source>
        <strain>cv. Columbia</strain>
    </source>
</reference>
<reference key="3">
    <citation type="submission" date="2006-07" db="EMBL/GenBank/DDBJ databases">
        <title>Large-scale analysis of RIKEN Arabidopsis full-length (RAFL) cDNAs.</title>
        <authorList>
            <person name="Totoki Y."/>
            <person name="Seki M."/>
            <person name="Ishida J."/>
            <person name="Nakajima M."/>
            <person name="Enju A."/>
            <person name="Kamiya A."/>
            <person name="Narusaka M."/>
            <person name="Shin-i T."/>
            <person name="Nakagawa M."/>
            <person name="Sakamoto N."/>
            <person name="Oishi K."/>
            <person name="Kohara Y."/>
            <person name="Kobayashi M."/>
            <person name="Toyoda A."/>
            <person name="Sakaki Y."/>
            <person name="Sakurai T."/>
            <person name="Iida K."/>
            <person name="Akiyama K."/>
            <person name="Satou M."/>
            <person name="Toyoda T."/>
            <person name="Konagaya A."/>
            <person name="Carninci P."/>
            <person name="Kawai J."/>
            <person name="Hayashizaki Y."/>
            <person name="Shinozaki K."/>
        </authorList>
    </citation>
    <scope>NUCLEOTIDE SEQUENCE [LARGE SCALE MRNA]</scope>
    <source>
        <strain>cv. Columbia</strain>
    </source>
</reference>
<reference key="4">
    <citation type="journal article" date="2007" name="Plant Physiol.">
        <title>An IRE-like AGC kinase gene, MtIRE, has unique expression in the invasion zone of developing root nodules in Medicago truncatula.</title>
        <authorList>
            <person name="Pislariu C.I."/>
            <person name="Dickstein R."/>
        </authorList>
    </citation>
    <scope>GENE FAMILY</scope>
</reference>
<accession>F4HPN2</accession>
<accession>Q0WLU7</accession>
<accession>Q9MAJ4</accession>
<evidence type="ECO:0000250" key="1">
    <source>
        <dbReference type="UniProtKB" id="P42818"/>
    </source>
</evidence>
<evidence type="ECO:0000250" key="2">
    <source>
        <dbReference type="UniProtKB" id="Q9LE81"/>
    </source>
</evidence>
<evidence type="ECO:0000255" key="3"/>
<evidence type="ECO:0000255" key="4">
    <source>
        <dbReference type="PROSITE-ProRule" id="PRU00159"/>
    </source>
</evidence>
<evidence type="ECO:0000256" key="5">
    <source>
        <dbReference type="SAM" id="MobiDB-lite"/>
    </source>
</evidence>
<evidence type="ECO:0000303" key="6">
    <source>
    </source>
</evidence>
<evidence type="ECO:0000305" key="7"/>
<evidence type="ECO:0000312" key="8">
    <source>
        <dbReference type="Araport" id="AT1G45160"/>
    </source>
</evidence>
<evidence type="ECO:0000312" key="9">
    <source>
        <dbReference type="EMBL" id="AAF69167.1"/>
    </source>
</evidence>
<protein>
    <recommendedName>
        <fullName evidence="7">Probable serine/threonine protein kinase IRE4</fullName>
        <shortName evidence="6">AtIRE4</shortName>
        <ecNumber evidence="7">2.7.11.1</ecNumber>
    </recommendedName>
</protein>
<organism>
    <name type="scientific">Arabidopsis thaliana</name>
    <name type="common">Mouse-ear cress</name>
    <dbReference type="NCBI Taxonomy" id="3702"/>
    <lineage>
        <taxon>Eukaryota</taxon>
        <taxon>Viridiplantae</taxon>
        <taxon>Streptophyta</taxon>
        <taxon>Embryophyta</taxon>
        <taxon>Tracheophyta</taxon>
        <taxon>Spermatophyta</taxon>
        <taxon>Magnoliopsida</taxon>
        <taxon>eudicotyledons</taxon>
        <taxon>Gunneridae</taxon>
        <taxon>Pentapetalae</taxon>
        <taxon>rosids</taxon>
        <taxon>malvids</taxon>
        <taxon>Brassicales</taxon>
        <taxon>Brassicaceae</taxon>
        <taxon>Camelineae</taxon>
        <taxon>Arabidopsis</taxon>
    </lineage>
</organism>
<comment type="catalytic activity">
    <reaction evidence="7">
        <text>L-seryl-[protein] + ATP = O-phospho-L-seryl-[protein] + ADP + H(+)</text>
        <dbReference type="Rhea" id="RHEA:17989"/>
        <dbReference type="Rhea" id="RHEA-COMP:9863"/>
        <dbReference type="Rhea" id="RHEA-COMP:11604"/>
        <dbReference type="ChEBI" id="CHEBI:15378"/>
        <dbReference type="ChEBI" id="CHEBI:29999"/>
        <dbReference type="ChEBI" id="CHEBI:30616"/>
        <dbReference type="ChEBI" id="CHEBI:83421"/>
        <dbReference type="ChEBI" id="CHEBI:456216"/>
        <dbReference type="EC" id="2.7.11.1"/>
    </reaction>
</comment>
<comment type="catalytic activity">
    <reaction evidence="7">
        <text>L-threonyl-[protein] + ATP = O-phospho-L-threonyl-[protein] + ADP + H(+)</text>
        <dbReference type="Rhea" id="RHEA:46608"/>
        <dbReference type="Rhea" id="RHEA-COMP:11060"/>
        <dbReference type="Rhea" id="RHEA-COMP:11605"/>
        <dbReference type="ChEBI" id="CHEBI:15378"/>
        <dbReference type="ChEBI" id="CHEBI:30013"/>
        <dbReference type="ChEBI" id="CHEBI:30616"/>
        <dbReference type="ChEBI" id="CHEBI:61977"/>
        <dbReference type="ChEBI" id="CHEBI:456216"/>
        <dbReference type="EC" id="2.7.11.1"/>
    </reaction>
</comment>
<comment type="alternative products">
    <event type="alternative splicing"/>
    <isoform>
        <id>F4HPN2-1</id>
        <name>1</name>
        <sequence type="displayed"/>
    </isoform>
    <text>A number of isoforms are produced. According to EST sequences.</text>
</comment>
<comment type="similarity">
    <text evidence="7">Belongs to the protein kinase superfamily. AGC Ser/Thr protein kinase family.</text>
</comment>
<comment type="sequence caution" evidence="7">
    <conflict type="erroneous gene model prediction">
        <sequence resource="EMBL-CDS" id="AAF69167"/>
    </conflict>
</comment>
<name>IRE4_ARATH</name>
<feature type="chain" id="PRO_0000431356" description="Probable serine/threonine protein kinase IRE4">
    <location>
        <begin position="1"/>
        <end position="1042"/>
    </location>
</feature>
<feature type="domain" description="Protein kinase" evidence="4">
    <location>
        <begin position="670"/>
        <end position="955"/>
    </location>
</feature>
<feature type="domain" description="AGC-kinase C-terminal" evidence="3">
    <location>
        <begin position="956"/>
        <end position="1042"/>
    </location>
</feature>
<feature type="zinc finger region" description="C2H2-type; atypical" evidence="2">
    <location>
        <begin position="402"/>
        <end position="421"/>
    </location>
</feature>
<feature type="region of interest" description="Disordered" evidence="5">
    <location>
        <begin position="1"/>
        <end position="75"/>
    </location>
</feature>
<feature type="region of interest" description="Disordered" evidence="5">
    <location>
        <begin position="90"/>
        <end position="115"/>
    </location>
</feature>
<feature type="region of interest" description="Disordered" evidence="5">
    <location>
        <begin position="297"/>
        <end position="327"/>
    </location>
</feature>
<feature type="region of interest" description="Disordered" evidence="5">
    <location>
        <begin position="830"/>
        <end position="850"/>
    </location>
</feature>
<feature type="compositionally biased region" description="Basic and acidic residues" evidence="5">
    <location>
        <begin position="1"/>
        <end position="10"/>
    </location>
</feature>
<feature type="compositionally biased region" description="Basic and acidic residues" evidence="5">
    <location>
        <begin position="102"/>
        <end position="115"/>
    </location>
</feature>
<feature type="compositionally biased region" description="Basic and acidic residues" evidence="5">
    <location>
        <begin position="314"/>
        <end position="327"/>
    </location>
</feature>
<feature type="active site" description="Proton acceptor" evidence="4">
    <location>
        <position position="793"/>
    </location>
</feature>
<feature type="binding site" evidence="4">
    <location>
        <begin position="676"/>
        <end position="684"/>
    </location>
    <ligand>
        <name>ATP</name>
        <dbReference type="ChEBI" id="CHEBI:30616"/>
    </ligand>
</feature>
<feature type="binding site" evidence="4">
    <location>
        <position position="699"/>
    </location>
    <ligand>
        <name>ATP</name>
        <dbReference type="ChEBI" id="CHEBI:30616"/>
    </ligand>
</feature>
<feature type="modified residue" description="Phosphoserine" evidence="1">
    <location>
        <position position="854"/>
    </location>
</feature>
<feature type="sequence conflict" description="In Ref. 3; BAF01910." evidence="7" ref="3">
    <original>Y</original>
    <variation>C</variation>
    <location>
        <position position="313"/>
    </location>
</feature>
<dbReference type="EC" id="2.7.11.1" evidence="7"/>
<dbReference type="EMBL" id="AC007915">
    <property type="protein sequence ID" value="AAF69167.1"/>
    <property type="status" value="ALT_SEQ"/>
    <property type="molecule type" value="Genomic_DNA"/>
</dbReference>
<dbReference type="EMBL" id="CP002684">
    <property type="protein sequence ID" value="AEE32085.1"/>
    <property type="molecule type" value="Genomic_DNA"/>
</dbReference>
<dbReference type="EMBL" id="AK230091">
    <property type="protein sequence ID" value="BAF01910.1"/>
    <property type="molecule type" value="mRNA"/>
</dbReference>
<dbReference type="PIR" id="H96509">
    <property type="entry name" value="H96509"/>
</dbReference>
<dbReference type="RefSeq" id="NP_175130.2">
    <molecule id="F4HPN2-1"/>
    <property type="nucleotide sequence ID" value="NM_103590.3"/>
</dbReference>
<dbReference type="SMR" id="F4HPN2"/>
<dbReference type="FunCoup" id="F4HPN2">
    <property type="interactions" value="743"/>
</dbReference>
<dbReference type="STRING" id="3702.F4HPN2"/>
<dbReference type="iPTMnet" id="F4HPN2"/>
<dbReference type="PaxDb" id="3702-AT1G45160.2"/>
<dbReference type="EnsemblPlants" id="AT1G45160.1">
    <molecule id="F4HPN2-1"/>
    <property type="protein sequence ID" value="AT1G45160.1"/>
    <property type="gene ID" value="AT1G45160"/>
</dbReference>
<dbReference type="GeneID" id="841084"/>
<dbReference type="Gramene" id="AT1G45160.1">
    <molecule id="F4HPN2-1"/>
    <property type="protein sequence ID" value="AT1G45160.1"/>
    <property type="gene ID" value="AT1G45160"/>
</dbReference>
<dbReference type="KEGG" id="ath:AT1G45160"/>
<dbReference type="Araport" id="AT1G45160"/>
<dbReference type="TAIR" id="AT1G45160"/>
<dbReference type="eggNOG" id="KOG0606">
    <property type="taxonomic scope" value="Eukaryota"/>
</dbReference>
<dbReference type="InParanoid" id="F4HPN2"/>
<dbReference type="PRO" id="PR:F4HPN2"/>
<dbReference type="Proteomes" id="UP000006548">
    <property type="component" value="Chromosome 1"/>
</dbReference>
<dbReference type="ExpressionAtlas" id="F4HPN2">
    <property type="expression patterns" value="baseline and differential"/>
</dbReference>
<dbReference type="GO" id="GO:0005524">
    <property type="term" value="F:ATP binding"/>
    <property type="evidence" value="ECO:0007669"/>
    <property type="project" value="UniProtKB-KW"/>
</dbReference>
<dbReference type="GO" id="GO:0106310">
    <property type="term" value="F:protein serine kinase activity"/>
    <property type="evidence" value="ECO:0007669"/>
    <property type="project" value="RHEA"/>
</dbReference>
<dbReference type="GO" id="GO:0004674">
    <property type="term" value="F:protein serine/threonine kinase activity"/>
    <property type="evidence" value="ECO:0007669"/>
    <property type="project" value="UniProtKB-KW"/>
</dbReference>
<dbReference type="GO" id="GO:0008270">
    <property type="term" value="F:zinc ion binding"/>
    <property type="evidence" value="ECO:0007669"/>
    <property type="project" value="UniProtKB-KW"/>
</dbReference>
<dbReference type="CDD" id="cd05579">
    <property type="entry name" value="STKc_MAST_like"/>
    <property type="match status" value="1"/>
</dbReference>
<dbReference type="FunFam" id="1.10.510.10:FF:000446">
    <property type="entry name" value="Microtubule associated serine/threonine kinase 2"/>
    <property type="match status" value="1"/>
</dbReference>
<dbReference type="FunFam" id="3.30.200.20:FF:000147">
    <property type="entry name" value="probable serine/threonine protein kinase IREH1"/>
    <property type="match status" value="1"/>
</dbReference>
<dbReference type="Gene3D" id="3.30.200.20">
    <property type="entry name" value="Phosphorylase Kinase, domain 1"/>
    <property type="match status" value="1"/>
</dbReference>
<dbReference type="Gene3D" id="1.10.510.10">
    <property type="entry name" value="Transferase(Phosphotransferase) domain 1"/>
    <property type="match status" value="1"/>
</dbReference>
<dbReference type="InterPro" id="IPR011009">
    <property type="entry name" value="Kinase-like_dom_sf"/>
</dbReference>
<dbReference type="InterPro" id="IPR000719">
    <property type="entry name" value="Prot_kinase_dom"/>
</dbReference>
<dbReference type="InterPro" id="IPR008271">
    <property type="entry name" value="Ser/Thr_kinase_AS"/>
</dbReference>
<dbReference type="InterPro" id="IPR050236">
    <property type="entry name" value="Ser_Thr_kinase_AGC"/>
</dbReference>
<dbReference type="PANTHER" id="PTHR24356">
    <property type="entry name" value="SERINE/THREONINE-PROTEIN KINASE"/>
    <property type="match status" value="1"/>
</dbReference>
<dbReference type="PANTHER" id="PTHR24356:SF354">
    <property type="entry name" value="SERINE_THREONINE PROTEIN KINASE IRE4-RELATED"/>
    <property type="match status" value="1"/>
</dbReference>
<dbReference type="Pfam" id="PF00069">
    <property type="entry name" value="Pkinase"/>
    <property type="match status" value="1"/>
</dbReference>
<dbReference type="SMART" id="SM00220">
    <property type="entry name" value="S_TKc"/>
    <property type="match status" value="1"/>
</dbReference>
<dbReference type="SUPFAM" id="SSF56112">
    <property type="entry name" value="Protein kinase-like (PK-like)"/>
    <property type="match status" value="1"/>
</dbReference>
<dbReference type="PROSITE" id="PS50011">
    <property type="entry name" value="PROTEIN_KINASE_DOM"/>
    <property type="match status" value="1"/>
</dbReference>
<dbReference type="PROSITE" id="PS00108">
    <property type="entry name" value="PROTEIN_KINASE_ST"/>
    <property type="match status" value="1"/>
</dbReference>
<keyword id="KW-0025">Alternative splicing</keyword>
<keyword id="KW-0067">ATP-binding</keyword>
<keyword id="KW-0418">Kinase</keyword>
<keyword id="KW-0479">Metal-binding</keyword>
<keyword id="KW-0547">Nucleotide-binding</keyword>
<keyword id="KW-0597">Phosphoprotein</keyword>
<keyword id="KW-1185">Reference proteome</keyword>
<keyword id="KW-0723">Serine/threonine-protein kinase</keyword>
<keyword id="KW-0808">Transferase</keyword>
<keyword id="KW-0862">Zinc</keyword>
<keyword id="KW-0863">Zinc-finger</keyword>
<sequence length="1042" mass="117997">MAEENRKDRGVSSTVAIPSGLNRIKTRLASSGPRPEDSSDTVLKPPFNRNQKTIVPRGHGRTTGSSKQERKGTKLSRWLASYKPKYSCHPPKYACSSTTSSEEIKLRGKNSGKDEEKMIKISETNPPCSKSMGIKSFSHELGPRGGVQTPYPRPHSYNDLKELLGSLHSRFDVAKETVDKKLDVFVRDVKEAMEKMDPSCPEDREMAEQLLDVARACMEMTSAQLRATCESIVQDLTRKRKQCQAGLVKWLFSQLLFILTHCTRVVMFQKETEPIDESSFRKFKECLERIPALETDWGSTPRVDDSGSGYPEYQRNEAGQKFKRRDKESLESETALDYVVPNDHGNNAAREGYAAAKQEFPSHEPQFDSKVVEQRFYLSDEYEDKMSNEPGKELGGSDYVICRICEEEVPLFHLEPHSYICAYADKCEINCVDVDERLLKLEEILEQIIDSRSLNSFTQAGGLENSVLRKSGVASEGCSPKINEWRNKGLEGMFEDLHEMDTAFIDESYTYPIHLKSHVGAKFCHHATSSSTGSITSVSSTNTPRTSHFDSYWLERHCPEQEDLRLMMDLSDIARCGASTDFSKEGSCDYIMACMQDIQAVLKQGKLKALVIDTFGGRIEKLLCEKYLHARELTADKSSVGNIKESEDVLEHASATPQLLLKDRISIDDFEIIKPISRGAFGKVFLARKRTTGDFFAIKVLKKLDMIRKNDIERILQERNILITVRYPFLVRFFYSFTCRDNLYLVMEYLNGGDLYSLLQKVGCLDEEIARIYIAELVLALEYLHSLKIVHRDLKPDNLLIAYNGHIKLTDFGLSKIGLINNTIDLSGHESDVSPRTNSHHFQKNQEEERIRHSAVGTPDYLAPEILLGTEHGYAADWWSAGIVLFELLTGIPPFTASRPEKIFDNILNGKMPWPDVPGEMSYEAQDLINRLLVHEPEKRLGANGAAEVKSHPFFQGVDWENLALQKAAFVPQPESINDTSYFVSRFSESSCSDTETGNNSGSNPDSGDEVGIWKLHPFLSRYSICNHRIYRKLFFLLLCVF</sequence>
<proteinExistence type="evidence at transcript level"/>
<gene>
    <name evidence="6" type="primary">IRE4</name>
    <name evidence="8" type="ordered locus">At1g45160</name>
    <name evidence="9" type="ORF">F27F5.23</name>
</gene>